<reference key="1">
    <citation type="journal article" date="2011" name="J. Bacteriol.">
        <title>Complete genome and proteome of Acholeplasma laidlawii.</title>
        <authorList>
            <person name="Lazarev V.N."/>
            <person name="Levitskii S.A."/>
            <person name="Basovskii Y.I."/>
            <person name="Chukin M.M."/>
            <person name="Akopian T.A."/>
            <person name="Vereshchagin V.V."/>
            <person name="Kostrjukova E.S."/>
            <person name="Kovaleva G.Y."/>
            <person name="Kazanov M.D."/>
            <person name="Malko D.B."/>
            <person name="Vitreschak A.G."/>
            <person name="Sernova N.V."/>
            <person name="Gelfand M.S."/>
            <person name="Demina I.A."/>
            <person name="Serebryakova M.V."/>
            <person name="Galyamina M.A."/>
            <person name="Vtyurin N.N."/>
            <person name="Rogov S.I."/>
            <person name="Alexeev D.G."/>
            <person name="Ladygina V.G."/>
            <person name="Govorun V.M."/>
        </authorList>
    </citation>
    <scope>NUCLEOTIDE SEQUENCE [LARGE SCALE GENOMIC DNA]</scope>
    <source>
        <strain>PG-8A</strain>
    </source>
</reference>
<name>END4_ACHLI</name>
<comment type="function">
    <text evidence="1">Endonuclease IV plays a role in DNA repair. It cleaves phosphodiester bonds at apurinic or apyrimidinic (AP) sites, generating a 3'-hydroxyl group and a 5'-terminal sugar phosphate.</text>
</comment>
<comment type="catalytic activity">
    <reaction evidence="1">
        <text>Endonucleolytic cleavage to 5'-phosphooligonucleotide end-products.</text>
        <dbReference type="EC" id="3.1.21.2"/>
    </reaction>
</comment>
<comment type="cofactor">
    <cofactor evidence="1">
        <name>Zn(2+)</name>
        <dbReference type="ChEBI" id="CHEBI:29105"/>
    </cofactor>
    <text evidence="1">Binds 3 Zn(2+) ions.</text>
</comment>
<comment type="similarity">
    <text evidence="1">Belongs to the AP endonuclease 2 family.</text>
</comment>
<dbReference type="EC" id="3.1.21.2" evidence="1"/>
<dbReference type="EMBL" id="CP000896">
    <property type="protein sequence ID" value="ABX81101.1"/>
    <property type="molecule type" value="Genomic_DNA"/>
</dbReference>
<dbReference type="RefSeq" id="WP_012242432.1">
    <property type="nucleotide sequence ID" value="NC_010163.1"/>
</dbReference>
<dbReference type="SMR" id="A9NFH1"/>
<dbReference type="STRING" id="441768.ACL_0482"/>
<dbReference type="GeneID" id="41338662"/>
<dbReference type="KEGG" id="acl:ACL_0482"/>
<dbReference type="eggNOG" id="COG0648">
    <property type="taxonomic scope" value="Bacteria"/>
</dbReference>
<dbReference type="HOGENOM" id="CLU_025885_4_1_14"/>
<dbReference type="OrthoDB" id="9805666at2"/>
<dbReference type="Proteomes" id="UP000008558">
    <property type="component" value="Chromosome"/>
</dbReference>
<dbReference type="GO" id="GO:0008833">
    <property type="term" value="F:deoxyribonuclease IV (phage-T4-induced) activity"/>
    <property type="evidence" value="ECO:0007669"/>
    <property type="project" value="UniProtKB-UniRule"/>
</dbReference>
<dbReference type="GO" id="GO:0003677">
    <property type="term" value="F:DNA binding"/>
    <property type="evidence" value="ECO:0007669"/>
    <property type="project" value="InterPro"/>
</dbReference>
<dbReference type="GO" id="GO:0003906">
    <property type="term" value="F:DNA-(apurinic or apyrimidinic site) endonuclease activity"/>
    <property type="evidence" value="ECO:0007669"/>
    <property type="project" value="TreeGrafter"/>
</dbReference>
<dbReference type="GO" id="GO:0008081">
    <property type="term" value="F:phosphoric diester hydrolase activity"/>
    <property type="evidence" value="ECO:0007669"/>
    <property type="project" value="TreeGrafter"/>
</dbReference>
<dbReference type="GO" id="GO:0008270">
    <property type="term" value="F:zinc ion binding"/>
    <property type="evidence" value="ECO:0007669"/>
    <property type="project" value="UniProtKB-UniRule"/>
</dbReference>
<dbReference type="GO" id="GO:0006284">
    <property type="term" value="P:base-excision repair"/>
    <property type="evidence" value="ECO:0007669"/>
    <property type="project" value="TreeGrafter"/>
</dbReference>
<dbReference type="CDD" id="cd00019">
    <property type="entry name" value="AP2Ec"/>
    <property type="match status" value="1"/>
</dbReference>
<dbReference type="FunFam" id="3.20.20.150:FF:000001">
    <property type="entry name" value="Probable endonuclease 4"/>
    <property type="match status" value="1"/>
</dbReference>
<dbReference type="Gene3D" id="3.20.20.150">
    <property type="entry name" value="Divalent-metal-dependent TIM barrel enzymes"/>
    <property type="match status" value="1"/>
</dbReference>
<dbReference type="HAMAP" id="MF_00152">
    <property type="entry name" value="Nfo"/>
    <property type="match status" value="1"/>
</dbReference>
<dbReference type="InterPro" id="IPR001719">
    <property type="entry name" value="AP_endonuc_2"/>
</dbReference>
<dbReference type="InterPro" id="IPR018246">
    <property type="entry name" value="AP_endonuc_F2_Zn_BS"/>
</dbReference>
<dbReference type="InterPro" id="IPR036237">
    <property type="entry name" value="Xyl_isomerase-like_sf"/>
</dbReference>
<dbReference type="InterPro" id="IPR013022">
    <property type="entry name" value="Xyl_isomerase-like_TIM-brl"/>
</dbReference>
<dbReference type="NCBIfam" id="TIGR00587">
    <property type="entry name" value="nfo"/>
    <property type="match status" value="1"/>
</dbReference>
<dbReference type="NCBIfam" id="NF002196">
    <property type="entry name" value="PRK01060.1-1"/>
    <property type="match status" value="1"/>
</dbReference>
<dbReference type="PANTHER" id="PTHR21445:SF0">
    <property type="entry name" value="APURINIC-APYRIMIDINIC ENDONUCLEASE"/>
    <property type="match status" value="1"/>
</dbReference>
<dbReference type="PANTHER" id="PTHR21445">
    <property type="entry name" value="ENDONUCLEASE IV ENDODEOXYRIBONUCLEASE IV"/>
    <property type="match status" value="1"/>
</dbReference>
<dbReference type="Pfam" id="PF01261">
    <property type="entry name" value="AP_endonuc_2"/>
    <property type="match status" value="1"/>
</dbReference>
<dbReference type="SMART" id="SM00518">
    <property type="entry name" value="AP2Ec"/>
    <property type="match status" value="1"/>
</dbReference>
<dbReference type="SUPFAM" id="SSF51658">
    <property type="entry name" value="Xylose isomerase-like"/>
    <property type="match status" value="1"/>
</dbReference>
<dbReference type="PROSITE" id="PS00729">
    <property type="entry name" value="AP_NUCLEASE_F2_1"/>
    <property type="match status" value="1"/>
</dbReference>
<dbReference type="PROSITE" id="PS00730">
    <property type="entry name" value="AP_NUCLEASE_F2_2"/>
    <property type="match status" value="1"/>
</dbReference>
<dbReference type="PROSITE" id="PS00731">
    <property type="entry name" value="AP_NUCLEASE_F2_3"/>
    <property type="match status" value="1"/>
</dbReference>
<dbReference type="PROSITE" id="PS51432">
    <property type="entry name" value="AP_NUCLEASE_F2_4"/>
    <property type="match status" value="1"/>
</dbReference>
<evidence type="ECO:0000255" key="1">
    <source>
        <dbReference type="HAMAP-Rule" id="MF_00152"/>
    </source>
</evidence>
<gene>
    <name evidence="1" type="primary">nfo</name>
    <name type="ordered locus">ACL_0482</name>
</gene>
<feature type="chain" id="PRO_1000076798" description="Probable endonuclease 4">
    <location>
        <begin position="1"/>
        <end position="294"/>
    </location>
</feature>
<feature type="binding site" evidence="1">
    <location>
        <position position="71"/>
    </location>
    <ligand>
        <name>Zn(2+)</name>
        <dbReference type="ChEBI" id="CHEBI:29105"/>
        <label>1</label>
    </ligand>
</feature>
<feature type="binding site" evidence="1">
    <location>
        <position position="111"/>
    </location>
    <ligand>
        <name>Zn(2+)</name>
        <dbReference type="ChEBI" id="CHEBI:29105"/>
        <label>1</label>
    </ligand>
</feature>
<feature type="binding site" evidence="1">
    <location>
        <position position="148"/>
    </location>
    <ligand>
        <name>Zn(2+)</name>
        <dbReference type="ChEBI" id="CHEBI:29105"/>
        <label>1</label>
    </ligand>
</feature>
<feature type="binding site" evidence="1">
    <location>
        <position position="148"/>
    </location>
    <ligand>
        <name>Zn(2+)</name>
        <dbReference type="ChEBI" id="CHEBI:29105"/>
        <label>2</label>
    </ligand>
</feature>
<feature type="binding site" evidence="1">
    <location>
        <position position="182"/>
    </location>
    <ligand>
        <name>Zn(2+)</name>
        <dbReference type="ChEBI" id="CHEBI:29105"/>
        <label>2</label>
    </ligand>
</feature>
<feature type="binding site" evidence="1">
    <location>
        <position position="185"/>
    </location>
    <ligand>
        <name>Zn(2+)</name>
        <dbReference type="ChEBI" id="CHEBI:29105"/>
        <label>3</label>
    </ligand>
</feature>
<feature type="binding site" evidence="1">
    <location>
        <position position="217"/>
    </location>
    <ligand>
        <name>Zn(2+)</name>
        <dbReference type="ChEBI" id="CHEBI:29105"/>
        <label>2</label>
    </ligand>
</feature>
<feature type="binding site" evidence="1">
    <location>
        <position position="230"/>
    </location>
    <ligand>
        <name>Zn(2+)</name>
        <dbReference type="ChEBI" id="CHEBI:29105"/>
        <label>3</label>
    </ligand>
</feature>
<feature type="binding site" evidence="1">
    <location>
        <position position="232"/>
    </location>
    <ligand>
        <name>Zn(2+)</name>
        <dbReference type="ChEBI" id="CHEBI:29105"/>
        <label>3</label>
    </ligand>
</feature>
<feature type="binding site" evidence="1">
    <location>
        <position position="262"/>
    </location>
    <ligand>
        <name>Zn(2+)</name>
        <dbReference type="ChEBI" id="CHEBI:29105"/>
        <label>2</label>
    </ligand>
</feature>
<keyword id="KW-0227">DNA damage</keyword>
<keyword id="KW-0234">DNA repair</keyword>
<keyword id="KW-0255">Endonuclease</keyword>
<keyword id="KW-0378">Hydrolase</keyword>
<keyword id="KW-0479">Metal-binding</keyword>
<keyword id="KW-0540">Nuclease</keyword>
<keyword id="KW-1185">Reference proteome</keyword>
<keyword id="KW-0862">Zinc</keyword>
<proteinExistence type="inferred from homology"/>
<sequence length="294" mass="33121">MLILGSHVSLKGNDMFYGSVLEALEYNANTMMVYTGAPQNTIRKPIETMKIEEAHALMKEKGIDLNHVVVHAPYIINLCNPDPERRAFAVEFLTKEVIRVGQMGINQMVLHPGSAVGGNREEAVQWISEGLNQIIDNTKSYNVRIALETMAGKGNEIGKTFEEIKAIIDGVDDKSRVSVCFDTCHVHDAGYDVIHDLDKTLQLFDDIVGLNYISVVHVNDSKNELGASKDRHENIGFGYIGYDALLKVIYHEAFKEIPKILETPYVNDKPPYKLEIQMIKDRVFDNELKTKLEK</sequence>
<organism>
    <name type="scientific">Acholeplasma laidlawii (strain PG-8A)</name>
    <dbReference type="NCBI Taxonomy" id="441768"/>
    <lineage>
        <taxon>Bacteria</taxon>
        <taxon>Bacillati</taxon>
        <taxon>Mycoplasmatota</taxon>
        <taxon>Mollicutes</taxon>
        <taxon>Acholeplasmatales</taxon>
        <taxon>Acholeplasmataceae</taxon>
        <taxon>Acholeplasma</taxon>
    </lineage>
</organism>
<protein>
    <recommendedName>
        <fullName evidence="1">Probable endonuclease 4</fullName>
        <ecNumber evidence="1">3.1.21.2</ecNumber>
    </recommendedName>
    <alternativeName>
        <fullName evidence="1">Endodeoxyribonuclease IV</fullName>
    </alternativeName>
    <alternativeName>
        <fullName evidence="1">Endonuclease IV</fullName>
    </alternativeName>
</protein>
<accession>A9NFH1</accession>